<accession>A0A2I6EDN3</accession>
<name>CM315_CONRE</name>
<feature type="signal peptide" evidence="3">
    <location>
        <begin position="1" status="less than"/>
        <end position="15"/>
    </location>
</feature>
<feature type="propeptide" id="PRO_0000444785" evidence="4">
    <location>
        <begin position="16"/>
        <end position="44"/>
    </location>
</feature>
<feature type="peptide" id="PRO_5014440230" description="Conotoxin reg3.15" evidence="4">
    <location>
        <begin position="45"/>
        <end position="59"/>
    </location>
</feature>
<feature type="disulfide bond" evidence="1">
    <location>
        <begin position="45"/>
        <end position="59"/>
    </location>
</feature>
<feature type="disulfide bond" evidence="1">
    <location>
        <begin position="46"/>
        <end position="55"/>
    </location>
</feature>
<feature type="disulfide bond" evidence="1">
    <location>
        <begin position="51"/>
        <end position="58"/>
    </location>
</feature>
<feature type="non-terminal residue" evidence="5">
    <location>
        <position position="1"/>
    </location>
</feature>
<keyword id="KW-1015">Disulfide bond</keyword>
<keyword id="KW-0964">Secreted</keyword>
<keyword id="KW-0732">Signal</keyword>
<keyword id="KW-0800">Toxin</keyword>
<dbReference type="EMBL" id="MF588949">
    <property type="protein sequence ID" value="AUJ88073.1"/>
    <property type="molecule type" value="mRNA"/>
</dbReference>
<dbReference type="GO" id="GO:0005576">
    <property type="term" value="C:extracellular region"/>
    <property type="evidence" value="ECO:0007669"/>
    <property type="project" value="UniProtKB-SubCell"/>
</dbReference>
<dbReference type="GO" id="GO:0090729">
    <property type="term" value="F:toxin activity"/>
    <property type="evidence" value="ECO:0007669"/>
    <property type="project" value="UniProtKB-KW"/>
</dbReference>
<reference key="1">
    <citation type="journal article" date="2017" name="FEBS J.">
        <title>Structural plasticity of Mini-M conotoxins: expression of all mini-M subtypes by Conus regius.</title>
        <authorList>
            <person name="Franco A."/>
            <person name="Dovell S."/>
            <person name="Moller C."/>
            <person name="Grandal M."/>
            <person name="Clark E."/>
            <person name="Mari F."/>
        </authorList>
    </citation>
    <scope>NUCLEOTIDE SEQUENCE [MRNA]</scope>
    <source>
        <tissue>Venom duct</tissue>
    </source>
</reference>
<evidence type="ECO:0000250" key="1">
    <source>
        <dbReference type="UniProtKB" id="P85021"/>
    </source>
</evidence>
<evidence type="ECO:0000303" key="2">
    <source>
    </source>
</evidence>
<evidence type="ECO:0000305" key="3"/>
<evidence type="ECO:0000305" key="4">
    <source>
    </source>
</evidence>
<evidence type="ECO:0000312" key="5">
    <source>
        <dbReference type="EMBL" id="AUJ88073.1"/>
    </source>
</evidence>
<proteinExistence type="evidence at transcript level"/>
<comment type="subcellular location">
    <subcellularLocation>
        <location evidence="4">Secreted</location>
    </subcellularLocation>
</comment>
<comment type="tissue specificity">
    <text evidence="4">Expressed by the venom duct.</text>
</comment>
<comment type="domain">
    <text evidence="3">The cysteine framework is III (CC-C-C-CC). Classified in the M-2 branch, since 2 residues stand between the fourth and the fifth cysteine residues.</text>
</comment>
<comment type="similarity">
    <text evidence="3">Belongs to the conotoxin M superfamily.</text>
</comment>
<sequence length="59" mass="6419">RVLLTICLLLFPLTAIPLGGDQPAERMRNVRSAVQDPRFDSVGWCCPIQGCILGCTPCC</sequence>
<organism>
    <name type="scientific">Conus regius</name>
    <name type="common">Crown cone</name>
    <dbReference type="NCBI Taxonomy" id="101314"/>
    <lineage>
        <taxon>Eukaryota</taxon>
        <taxon>Metazoa</taxon>
        <taxon>Spiralia</taxon>
        <taxon>Lophotrochozoa</taxon>
        <taxon>Mollusca</taxon>
        <taxon>Gastropoda</taxon>
        <taxon>Caenogastropoda</taxon>
        <taxon>Neogastropoda</taxon>
        <taxon>Conoidea</taxon>
        <taxon>Conidae</taxon>
        <taxon>Conus</taxon>
        <taxon>Stephanoconus</taxon>
    </lineage>
</organism>
<protein>
    <recommendedName>
        <fullName evidence="2">Conotoxin reg3.15</fullName>
        <shortName evidence="5">Rg3.15</shortName>
    </recommendedName>
</protein>